<name>CA13_CONAA</name>
<feature type="signal peptide" evidence="2">
    <location>
        <begin position="1"/>
        <end position="21"/>
    </location>
</feature>
<feature type="propeptide" id="PRO_0000453586" evidence="5">
    <location>
        <begin position="22"/>
        <end position="44"/>
    </location>
</feature>
<feature type="peptide" id="PRO_5018201173" description="Alpha-conotoxine-like Am1.3" evidence="3">
    <location>
        <begin position="45"/>
        <end position="60"/>
    </location>
</feature>
<feature type="modified residue" description="Cysteine amide" evidence="3">
    <location>
        <position position="60"/>
    </location>
</feature>
<reference key="1">
    <citation type="journal article" date="2019" name="J. Proteomics">
        <title>Cone snail prolyl-4-hydroxylase alpha-subunit sequences derived from transcriptomic data and mass spectrometric analysis of variable proline hydroxylation in C. amadis venom.</title>
        <authorList>
            <person name="Vijayasarathy M."/>
            <person name="Balaram P."/>
        </authorList>
    </citation>
    <scope>NUCLEOTIDE SEQUENCE [MRNA]</scope>
    <scope>PROTEIN SEQUENCE OF 45-60</scope>
    <scope>SUBCELLULAR LOCATION</scope>
    <scope>IDENTIFICATION BY MASS SPECTROMETRY</scope>
    <scope>AMIDATION AT CYS-60</scope>
    <source>
        <tissue>Venom</tissue>
        <tissue>Venom duct</tissue>
    </source>
</reference>
<sequence length="61" mass="6399">MGMRMMFTVFLLVVLATTVVSFMSGRASHGRNAAASDLIALTIKGCCSVPPCIANHPELCG</sequence>
<proteinExistence type="evidence at protein level"/>
<accession>A0A3G3C7V0</accession>
<protein>
    <recommendedName>
        <fullName evidence="4">Alpha-conotoxine-like Am1.3</fullName>
    </recommendedName>
</protein>
<keyword id="KW-0008">Acetylcholine receptor inhibiting toxin</keyword>
<keyword id="KW-0027">Amidation</keyword>
<keyword id="KW-0903">Direct protein sequencing</keyword>
<keyword id="KW-1015">Disulfide bond</keyword>
<keyword id="KW-0528">Neurotoxin</keyword>
<keyword id="KW-0629">Postsynaptic neurotoxin</keyword>
<keyword id="KW-0964">Secreted</keyword>
<keyword id="KW-0732">Signal</keyword>
<keyword id="KW-0800">Toxin</keyword>
<comment type="function">
    <text evidence="1">Alpha-conotoxins act on postsynaptic membranes, they bind to the nicotinic acetylcholine receptors (nAChR) and thus inhibit them.</text>
</comment>
<comment type="subcellular location">
    <subcellularLocation>
        <location evidence="3">Secreted</location>
    </subcellularLocation>
</comment>
<comment type="tissue specificity">
    <text evidence="5">Expressed by the venom duct.</text>
</comment>
<comment type="domain">
    <text evidence="4">The cysteine framework is I (CC-C-C). Alpha4/7 pattern.</text>
</comment>
<comment type="PTM">
    <text evidence="3">Is not hydroxylated.</text>
</comment>
<comment type="PTM">
    <text evidence="4">Contains 2 disulfide bonds.</text>
</comment>
<comment type="similarity">
    <text evidence="4">Belongs to the conotoxin A superfamily.</text>
</comment>
<evidence type="ECO:0000250" key="1">
    <source>
        <dbReference type="UniProtKB" id="E2DIH5"/>
    </source>
</evidence>
<evidence type="ECO:0000255" key="2"/>
<evidence type="ECO:0000269" key="3">
    <source>
    </source>
</evidence>
<evidence type="ECO:0000305" key="4"/>
<evidence type="ECO:0000305" key="5">
    <source>
    </source>
</evidence>
<dbReference type="EMBL" id="MH282817">
    <property type="protein sequence ID" value="AYP73024.1"/>
    <property type="molecule type" value="mRNA"/>
</dbReference>
<dbReference type="SMR" id="A0A3G3C7V0"/>
<dbReference type="GO" id="GO:0005576">
    <property type="term" value="C:extracellular region"/>
    <property type="evidence" value="ECO:0007669"/>
    <property type="project" value="UniProtKB-SubCell"/>
</dbReference>
<dbReference type="GO" id="GO:0035792">
    <property type="term" value="C:host cell postsynaptic membrane"/>
    <property type="evidence" value="ECO:0007669"/>
    <property type="project" value="UniProtKB-KW"/>
</dbReference>
<dbReference type="GO" id="GO:0030550">
    <property type="term" value="F:acetylcholine receptor inhibitor activity"/>
    <property type="evidence" value="ECO:0007669"/>
    <property type="project" value="UniProtKB-KW"/>
</dbReference>
<dbReference type="GO" id="GO:0090729">
    <property type="term" value="F:toxin activity"/>
    <property type="evidence" value="ECO:0007669"/>
    <property type="project" value="UniProtKB-KW"/>
</dbReference>
<dbReference type="InterPro" id="IPR009958">
    <property type="entry name" value="Conotoxin_a-typ"/>
</dbReference>
<dbReference type="Pfam" id="PF07365">
    <property type="entry name" value="Toxin_8"/>
    <property type="match status" value="1"/>
</dbReference>
<organism>
    <name type="scientific">Conus amadis</name>
    <name type="common">Amadis cone</name>
    <dbReference type="NCBI Taxonomy" id="198732"/>
    <lineage>
        <taxon>Eukaryota</taxon>
        <taxon>Metazoa</taxon>
        <taxon>Spiralia</taxon>
        <taxon>Lophotrochozoa</taxon>
        <taxon>Mollusca</taxon>
        <taxon>Gastropoda</taxon>
        <taxon>Caenogastropoda</taxon>
        <taxon>Neogastropoda</taxon>
        <taxon>Conoidea</taxon>
        <taxon>Conidae</taxon>
        <taxon>Conus</taxon>
        <taxon>Leptoconus</taxon>
    </lineage>
</organism>